<comment type="function">
    <text evidence="1">Catalyzes the anti-1,4-elimination of the C-3 phosphate and the C-6 proR hydrogen from 5-enolpyruvylshikimate-3-phosphate (EPSP) to yield chorismate, which is the branch point compound that serves as the starting substrate for the three terminal pathways of aromatic amino acid biosynthesis. This reaction introduces a second double bond into the aromatic ring system.</text>
</comment>
<comment type="catalytic activity">
    <reaction evidence="1">
        <text>5-O-(1-carboxyvinyl)-3-phosphoshikimate = chorismate + phosphate</text>
        <dbReference type="Rhea" id="RHEA:21020"/>
        <dbReference type="ChEBI" id="CHEBI:29748"/>
        <dbReference type="ChEBI" id="CHEBI:43474"/>
        <dbReference type="ChEBI" id="CHEBI:57701"/>
        <dbReference type="EC" id="4.2.3.5"/>
    </reaction>
</comment>
<comment type="cofactor">
    <cofactor evidence="1">
        <name>FMNH2</name>
        <dbReference type="ChEBI" id="CHEBI:57618"/>
    </cofactor>
    <text evidence="1">Reduced FMN (FMNH(2)).</text>
</comment>
<comment type="pathway">
    <text evidence="1">Metabolic intermediate biosynthesis; chorismate biosynthesis; chorismate from D-erythrose 4-phosphate and phosphoenolpyruvate: step 7/7.</text>
</comment>
<comment type="subunit">
    <text evidence="1">Homotetramer.</text>
</comment>
<comment type="similarity">
    <text evidence="1">Belongs to the chorismate synthase family.</text>
</comment>
<gene>
    <name evidence="1" type="primary">aroC</name>
    <name type="ordered locus">SSPA0444</name>
</gene>
<keyword id="KW-0028">Amino-acid biosynthesis</keyword>
<keyword id="KW-0057">Aromatic amino acid biosynthesis</keyword>
<keyword id="KW-0274">FAD</keyword>
<keyword id="KW-0285">Flavoprotein</keyword>
<keyword id="KW-0288">FMN</keyword>
<keyword id="KW-0456">Lyase</keyword>
<keyword id="KW-0521">NADP</keyword>
<accession>B5BBA5</accession>
<reference key="1">
    <citation type="journal article" date="2009" name="BMC Genomics">
        <title>Pseudogene accumulation in the evolutionary histories of Salmonella enterica serovars Paratyphi A and Typhi.</title>
        <authorList>
            <person name="Holt K.E."/>
            <person name="Thomson N.R."/>
            <person name="Wain J."/>
            <person name="Langridge G.C."/>
            <person name="Hasan R."/>
            <person name="Bhutta Z.A."/>
            <person name="Quail M.A."/>
            <person name="Norbertczak H."/>
            <person name="Walker D."/>
            <person name="Simmonds M."/>
            <person name="White B."/>
            <person name="Bason N."/>
            <person name="Mungall K."/>
            <person name="Dougan G."/>
            <person name="Parkhill J."/>
        </authorList>
    </citation>
    <scope>NUCLEOTIDE SEQUENCE [LARGE SCALE GENOMIC DNA]</scope>
    <source>
        <strain>AKU_12601</strain>
    </source>
</reference>
<dbReference type="EC" id="4.2.3.5" evidence="1"/>
<dbReference type="EMBL" id="FM200053">
    <property type="protein sequence ID" value="CAR58573.1"/>
    <property type="molecule type" value="Genomic_DNA"/>
</dbReference>
<dbReference type="RefSeq" id="WP_000918458.1">
    <property type="nucleotide sequence ID" value="NC_011147.1"/>
</dbReference>
<dbReference type="SMR" id="B5BBA5"/>
<dbReference type="KEGG" id="sek:SSPA0444"/>
<dbReference type="HOGENOM" id="CLU_034547_0_2_6"/>
<dbReference type="UniPathway" id="UPA00053">
    <property type="reaction ID" value="UER00090"/>
</dbReference>
<dbReference type="Proteomes" id="UP000001869">
    <property type="component" value="Chromosome"/>
</dbReference>
<dbReference type="GO" id="GO:0005829">
    <property type="term" value="C:cytosol"/>
    <property type="evidence" value="ECO:0007669"/>
    <property type="project" value="TreeGrafter"/>
</dbReference>
<dbReference type="GO" id="GO:0004107">
    <property type="term" value="F:chorismate synthase activity"/>
    <property type="evidence" value="ECO:0007669"/>
    <property type="project" value="UniProtKB-UniRule"/>
</dbReference>
<dbReference type="GO" id="GO:0010181">
    <property type="term" value="F:FMN binding"/>
    <property type="evidence" value="ECO:0007669"/>
    <property type="project" value="TreeGrafter"/>
</dbReference>
<dbReference type="GO" id="GO:0008652">
    <property type="term" value="P:amino acid biosynthetic process"/>
    <property type="evidence" value="ECO:0007669"/>
    <property type="project" value="UniProtKB-KW"/>
</dbReference>
<dbReference type="GO" id="GO:0009073">
    <property type="term" value="P:aromatic amino acid family biosynthetic process"/>
    <property type="evidence" value="ECO:0007669"/>
    <property type="project" value="UniProtKB-KW"/>
</dbReference>
<dbReference type="GO" id="GO:0009423">
    <property type="term" value="P:chorismate biosynthetic process"/>
    <property type="evidence" value="ECO:0007669"/>
    <property type="project" value="UniProtKB-UniRule"/>
</dbReference>
<dbReference type="CDD" id="cd07304">
    <property type="entry name" value="Chorismate_synthase"/>
    <property type="match status" value="1"/>
</dbReference>
<dbReference type="FunFam" id="3.60.150.10:FF:000001">
    <property type="entry name" value="Chorismate synthase"/>
    <property type="match status" value="1"/>
</dbReference>
<dbReference type="Gene3D" id="3.60.150.10">
    <property type="entry name" value="Chorismate synthase AroC"/>
    <property type="match status" value="1"/>
</dbReference>
<dbReference type="HAMAP" id="MF_00300">
    <property type="entry name" value="Chorismate_synth"/>
    <property type="match status" value="1"/>
</dbReference>
<dbReference type="InterPro" id="IPR000453">
    <property type="entry name" value="Chorismate_synth"/>
</dbReference>
<dbReference type="InterPro" id="IPR035904">
    <property type="entry name" value="Chorismate_synth_AroC_sf"/>
</dbReference>
<dbReference type="InterPro" id="IPR020541">
    <property type="entry name" value="Chorismate_synthase_CS"/>
</dbReference>
<dbReference type="NCBIfam" id="TIGR00033">
    <property type="entry name" value="aroC"/>
    <property type="match status" value="1"/>
</dbReference>
<dbReference type="NCBIfam" id="NF003793">
    <property type="entry name" value="PRK05382.1"/>
    <property type="match status" value="1"/>
</dbReference>
<dbReference type="PANTHER" id="PTHR21085">
    <property type="entry name" value="CHORISMATE SYNTHASE"/>
    <property type="match status" value="1"/>
</dbReference>
<dbReference type="PANTHER" id="PTHR21085:SF0">
    <property type="entry name" value="CHORISMATE SYNTHASE"/>
    <property type="match status" value="1"/>
</dbReference>
<dbReference type="Pfam" id="PF01264">
    <property type="entry name" value="Chorismate_synt"/>
    <property type="match status" value="1"/>
</dbReference>
<dbReference type="PIRSF" id="PIRSF001456">
    <property type="entry name" value="Chorismate_synth"/>
    <property type="match status" value="1"/>
</dbReference>
<dbReference type="SUPFAM" id="SSF103263">
    <property type="entry name" value="Chorismate synthase, AroC"/>
    <property type="match status" value="1"/>
</dbReference>
<dbReference type="PROSITE" id="PS00787">
    <property type="entry name" value="CHORISMATE_SYNTHASE_1"/>
    <property type="match status" value="1"/>
</dbReference>
<dbReference type="PROSITE" id="PS00788">
    <property type="entry name" value="CHORISMATE_SYNTHASE_2"/>
    <property type="match status" value="1"/>
</dbReference>
<dbReference type="PROSITE" id="PS00789">
    <property type="entry name" value="CHORISMATE_SYNTHASE_3"/>
    <property type="match status" value="1"/>
</dbReference>
<protein>
    <recommendedName>
        <fullName evidence="1">Chorismate synthase</fullName>
        <shortName evidence="1">CS</shortName>
        <ecNumber evidence="1">4.2.3.5</ecNumber>
    </recommendedName>
    <alternativeName>
        <fullName evidence="1">5-enolpyruvylshikimate-3-phosphate phospholyase</fullName>
    </alternativeName>
</protein>
<name>AROC_SALPK</name>
<evidence type="ECO:0000255" key="1">
    <source>
        <dbReference type="HAMAP-Rule" id="MF_00300"/>
    </source>
</evidence>
<organism>
    <name type="scientific">Salmonella paratyphi A (strain AKU_12601)</name>
    <dbReference type="NCBI Taxonomy" id="554290"/>
    <lineage>
        <taxon>Bacteria</taxon>
        <taxon>Pseudomonadati</taxon>
        <taxon>Pseudomonadota</taxon>
        <taxon>Gammaproteobacteria</taxon>
        <taxon>Enterobacterales</taxon>
        <taxon>Enterobacteriaceae</taxon>
        <taxon>Salmonella</taxon>
    </lineage>
</organism>
<sequence length="361" mass="39137">MAGNTIGQLFRVTTFGESHGLALGCIVDGVPPGIPLTEADLQHDLDRRRPGTSRYTTQRREPDQVKILSGVFDGVTTGTSIGLLIENTDQRSQDYSAIKDVFRPGHADYTYEQKYGLRDYRGGGRSSARETAMRVAAGAIAKKYLAEKFGIEIRGCLTQMGDIPLEIKDWRQVELNPFFCPDADKLDALDELMRALKKEGDSIGAKVTVVASGVPAGLGEPVFDRLDADIAHALMSINAVKGVEIGEGFNVVALRGSQNRDEITAQGFQSNHAGGILGGISSGQHIVAHMALKPTSSITVPGRTINRMGEEVEMITKGRHDPCVGIRAVPIAEAMLAIVLMDHLLRHRAQNADVKTEIPRW</sequence>
<feature type="chain" id="PRO_1000115397" description="Chorismate synthase">
    <location>
        <begin position="1"/>
        <end position="361"/>
    </location>
</feature>
<feature type="binding site" evidence="1">
    <location>
        <position position="48"/>
    </location>
    <ligand>
        <name>NADP(+)</name>
        <dbReference type="ChEBI" id="CHEBI:58349"/>
    </ligand>
</feature>
<feature type="binding site" evidence="1">
    <location>
        <position position="54"/>
    </location>
    <ligand>
        <name>NADP(+)</name>
        <dbReference type="ChEBI" id="CHEBI:58349"/>
    </ligand>
</feature>
<feature type="binding site" evidence="1">
    <location>
        <begin position="125"/>
        <end position="127"/>
    </location>
    <ligand>
        <name>FMN</name>
        <dbReference type="ChEBI" id="CHEBI:58210"/>
    </ligand>
</feature>
<feature type="binding site" evidence="1">
    <location>
        <begin position="238"/>
        <end position="239"/>
    </location>
    <ligand>
        <name>FMN</name>
        <dbReference type="ChEBI" id="CHEBI:58210"/>
    </ligand>
</feature>
<feature type="binding site" evidence="1">
    <location>
        <position position="278"/>
    </location>
    <ligand>
        <name>FMN</name>
        <dbReference type="ChEBI" id="CHEBI:58210"/>
    </ligand>
</feature>
<feature type="binding site" evidence="1">
    <location>
        <begin position="293"/>
        <end position="297"/>
    </location>
    <ligand>
        <name>FMN</name>
        <dbReference type="ChEBI" id="CHEBI:58210"/>
    </ligand>
</feature>
<feature type="binding site" evidence="1">
    <location>
        <position position="319"/>
    </location>
    <ligand>
        <name>FMN</name>
        <dbReference type="ChEBI" id="CHEBI:58210"/>
    </ligand>
</feature>
<proteinExistence type="inferred from homology"/>